<name>RPOE_BACAN</name>
<accession>Q81JW0</accession>
<accession>Q6HQG1</accession>
<accession>Q6KJT6</accession>
<feature type="chain" id="PRO_0000303117" description="Probable DNA-directed RNA polymerase subunit delta">
    <location>
        <begin position="1"/>
        <end position="175"/>
    </location>
</feature>
<feature type="domain" description="HTH HARE-type" evidence="2">
    <location>
        <begin position="14"/>
        <end position="81"/>
    </location>
</feature>
<feature type="region of interest" description="Disordered" evidence="3">
    <location>
        <begin position="91"/>
        <end position="175"/>
    </location>
</feature>
<feature type="compositionally biased region" description="Acidic residues" evidence="3">
    <location>
        <begin position="106"/>
        <end position="175"/>
    </location>
</feature>
<dbReference type="EMBL" id="AE016879">
    <property type="protein sequence ID" value="AAP29226.1"/>
    <property type="molecule type" value="Genomic_DNA"/>
</dbReference>
<dbReference type="EMBL" id="AE017334">
    <property type="protein sequence ID" value="AAT34729.1"/>
    <property type="molecule type" value="Genomic_DNA"/>
</dbReference>
<dbReference type="EMBL" id="AE017225">
    <property type="protein sequence ID" value="AAT57477.1"/>
    <property type="molecule type" value="Genomic_DNA"/>
</dbReference>
<dbReference type="RefSeq" id="NP_847740.1">
    <property type="nucleotide sequence ID" value="NC_003997.3"/>
</dbReference>
<dbReference type="RefSeq" id="WP_000346288.1">
    <property type="nucleotide sequence ID" value="NZ_WXXJ01000038.1"/>
</dbReference>
<dbReference type="RefSeq" id="YP_031427.1">
    <property type="nucleotide sequence ID" value="NC_005945.1"/>
</dbReference>
<dbReference type="SMR" id="Q81JW0"/>
<dbReference type="STRING" id="261594.GBAA_5584"/>
<dbReference type="DNASU" id="1085279"/>
<dbReference type="GeneID" id="45025169"/>
<dbReference type="KEGG" id="ban:BA_5584"/>
<dbReference type="KEGG" id="banh:HYU01_27270"/>
<dbReference type="KEGG" id="bar:GBAA_5584"/>
<dbReference type="KEGG" id="bat:BAS5188"/>
<dbReference type="PATRIC" id="fig|198094.11.peg.5542"/>
<dbReference type="eggNOG" id="COG3343">
    <property type="taxonomic scope" value="Bacteria"/>
</dbReference>
<dbReference type="HOGENOM" id="CLU_116648_1_0_9"/>
<dbReference type="OMA" id="TWGLRSW"/>
<dbReference type="OrthoDB" id="401223at2"/>
<dbReference type="Proteomes" id="UP000000427">
    <property type="component" value="Chromosome"/>
</dbReference>
<dbReference type="Proteomes" id="UP000000594">
    <property type="component" value="Chromosome"/>
</dbReference>
<dbReference type="GO" id="GO:0000428">
    <property type="term" value="C:DNA-directed RNA polymerase complex"/>
    <property type="evidence" value="ECO:0007669"/>
    <property type="project" value="UniProtKB-KW"/>
</dbReference>
<dbReference type="GO" id="GO:0003899">
    <property type="term" value="F:DNA-directed RNA polymerase activity"/>
    <property type="evidence" value="ECO:0007669"/>
    <property type="project" value="UniProtKB-UniRule"/>
</dbReference>
<dbReference type="GO" id="GO:0006351">
    <property type="term" value="P:DNA-templated transcription"/>
    <property type="evidence" value="ECO:0007669"/>
    <property type="project" value="InterPro"/>
</dbReference>
<dbReference type="GO" id="GO:0006355">
    <property type="term" value="P:regulation of DNA-templated transcription"/>
    <property type="evidence" value="ECO:0007669"/>
    <property type="project" value="UniProtKB-UniRule"/>
</dbReference>
<dbReference type="FunFam" id="1.10.10.1250:FF:000001">
    <property type="entry name" value="Probable DNA-directed RNA polymerase subunit delta"/>
    <property type="match status" value="1"/>
</dbReference>
<dbReference type="Gene3D" id="1.10.10.1250">
    <property type="entry name" value="RNA polymerase, subunit delta, N-terminal domain"/>
    <property type="match status" value="1"/>
</dbReference>
<dbReference type="HAMAP" id="MF_00357">
    <property type="entry name" value="RNApol_bact_RpoE"/>
    <property type="match status" value="1"/>
</dbReference>
<dbReference type="InterPro" id="IPR007759">
    <property type="entry name" value="Asxl_HARE-HTH"/>
</dbReference>
<dbReference type="InterPro" id="IPR038087">
    <property type="entry name" value="RNAP_delta_N_dom_sf"/>
</dbReference>
<dbReference type="InterPro" id="IPR029757">
    <property type="entry name" value="RpoE"/>
</dbReference>
<dbReference type="NCBIfam" id="TIGR04567">
    <property type="entry name" value="RNAP_delt_lowGC"/>
    <property type="match status" value="1"/>
</dbReference>
<dbReference type="Pfam" id="PF05066">
    <property type="entry name" value="HARE-HTH"/>
    <property type="match status" value="1"/>
</dbReference>
<dbReference type="PROSITE" id="PS51913">
    <property type="entry name" value="HTH_HARE"/>
    <property type="match status" value="1"/>
</dbReference>
<protein>
    <recommendedName>
        <fullName evidence="1">Probable DNA-directed RNA polymerase subunit delta</fullName>
    </recommendedName>
    <alternativeName>
        <fullName evidence="1">RNAP delta factor</fullName>
    </alternativeName>
</protein>
<comment type="function">
    <text evidence="1">Participates in both the initiation and recycling phases of transcription. In the presence of the delta subunit, RNAP displays an increased specificity of transcription, a decreased affinity for nucleic acids, and an increased efficiency of RNA synthesis because of enhanced recycling.</text>
</comment>
<comment type="subunit">
    <text evidence="1">RNAP is composed of a core of 2 alpha, a beta and a beta' subunits. The core is associated with a delta subunit and one of several sigma factors.</text>
</comment>
<comment type="similarity">
    <text evidence="1">Belongs to the RpoE family.</text>
</comment>
<gene>
    <name evidence="1" type="primary">rpoE</name>
    <name type="ordered locus">BA_5584</name>
    <name type="ordered locus">GBAA_5584</name>
    <name type="ordered locus">BAS5188</name>
</gene>
<sequence length="175" mass="20594">MDFKQYSPEELKECSMIEVVHSVLGDKRQATTFNELVQEIAQVLGLSQEQVNAKIAQFYTDLNIDGRFINLGENRWGLRSWYPYEQIDEEILPQPKPKKKRKVEDDGFDDYIEEDEDFDDADVTEDEDDDVEDLDKVLEDEDGDDDDLDDLDEDEDDFAEEELEYDETEEEEEEL</sequence>
<proteinExistence type="inferred from homology"/>
<keyword id="KW-0240">DNA-directed RNA polymerase</keyword>
<keyword id="KW-0548">Nucleotidyltransferase</keyword>
<keyword id="KW-1185">Reference proteome</keyword>
<keyword id="KW-0804">Transcription</keyword>
<keyword id="KW-0808">Transferase</keyword>
<organism>
    <name type="scientific">Bacillus anthracis</name>
    <dbReference type="NCBI Taxonomy" id="1392"/>
    <lineage>
        <taxon>Bacteria</taxon>
        <taxon>Bacillati</taxon>
        <taxon>Bacillota</taxon>
        <taxon>Bacilli</taxon>
        <taxon>Bacillales</taxon>
        <taxon>Bacillaceae</taxon>
        <taxon>Bacillus</taxon>
        <taxon>Bacillus cereus group</taxon>
    </lineage>
</organism>
<reference key="1">
    <citation type="journal article" date="2003" name="Nature">
        <title>The genome sequence of Bacillus anthracis Ames and comparison to closely related bacteria.</title>
        <authorList>
            <person name="Read T.D."/>
            <person name="Peterson S.N."/>
            <person name="Tourasse N.J."/>
            <person name="Baillie L.W."/>
            <person name="Paulsen I.T."/>
            <person name="Nelson K.E."/>
            <person name="Tettelin H."/>
            <person name="Fouts D.E."/>
            <person name="Eisen J.A."/>
            <person name="Gill S.R."/>
            <person name="Holtzapple E.K."/>
            <person name="Okstad O.A."/>
            <person name="Helgason E."/>
            <person name="Rilstone J."/>
            <person name="Wu M."/>
            <person name="Kolonay J.F."/>
            <person name="Beanan M.J."/>
            <person name="Dodson R.J."/>
            <person name="Brinkac L.M."/>
            <person name="Gwinn M.L."/>
            <person name="DeBoy R.T."/>
            <person name="Madpu R."/>
            <person name="Daugherty S.C."/>
            <person name="Durkin A.S."/>
            <person name="Haft D.H."/>
            <person name="Nelson W.C."/>
            <person name="Peterson J.D."/>
            <person name="Pop M."/>
            <person name="Khouri H.M."/>
            <person name="Radune D."/>
            <person name="Benton J.L."/>
            <person name="Mahamoud Y."/>
            <person name="Jiang L."/>
            <person name="Hance I.R."/>
            <person name="Weidman J.F."/>
            <person name="Berry K.J."/>
            <person name="Plaut R.D."/>
            <person name="Wolf A.M."/>
            <person name="Watkins K.L."/>
            <person name="Nierman W.C."/>
            <person name="Hazen A."/>
            <person name="Cline R.T."/>
            <person name="Redmond C."/>
            <person name="Thwaite J.E."/>
            <person name="White O."/>
            <person name="Salzberg S.L."/>
            <person name="Thomason B."/>
            <person name="Friedlander A.M."/>
            <person name="Koehler T.M."/>
            <person name="Hanna P.C."/>
            <person name="Kolstoe A.-B."/>
            <person name="Fraser C.M."/>
        </authorList>
    </citation>
    <scope>NUCLEOTIDE SEQUENCE [LARGE SCALE GENOMIC DNA]</scope>
    <source>
        <strain>Ames / isolate Porton</strain>
    </source>
</reference>
<reference key="2">
    <citation type="submission" date="2004-01" db="EMBL/GenBank/DDBJ databases">
        <title>Complete genome sequence of Bacillus anthracis Sterne.</title>
        <authorList>
            <person name="Brettin T.S."/>
            <person name="Bruce D."/>
            <person name="Challacombe J.F."/>
            <person name="Gilna P."/>
            <person name="Han C."/>
            <person name="Hill K."/>
            <person name="Hitchcock P."/>
            <person name="Jackson P."/>
            <person name="Keim P."/>
            <person name="Longmire J."/>
            <person name="Lucas S."/>
            <person name="Okinaka R."/>
            <person name="Richardson P."/>
            <person name="Rubin E."/>
            <person name="Tice H."/>
        </authorList>
    </citation>
    <scope>NUCLEOTIDE SEQUENCE [LARGE SCALE GENOMIC DNA]</scope>
    <source>
        <strain>Sterne</strain>
    </source>
</reference>
<reference key="3">
    <citation type="journal article" date="2009" name="J. Bacteriol.">
        <title>The complete genome sequence of Bacillus anthracis Ames 'Ancestor'.</title>
        <authorList>
            <person name="Ravel J."/>
            <person name="Jiang L."/>
            <person name="Stanley S.T."/>
            <person name="Wilson M.R."/>
            <person name="Decker R.S."/>
            <person name="Read T.D."/>
            <person name="Worsham P."/>
            <person name="Keim P.S."/>
            <person name="Salzberg S.L."/>
            <person name="Fraser-Liggett C.M."/>
            <person name="Rasko D.A."/>
        </authorList>
    </citation>
    <scope>NUCLEOTIDE SEQUENCE [LARGE SCALE GENOMIC DNA]</scope>
    <source>
        <strain>Ames ancestor</strain>
    </source>
</reference>
<evidence type="ECO:0000255" key="1">
    <source>
        <dbReference type="HAMAP-Rule" id="MF_00357"/>
    </source>
</evidence>
<evidence type="ECO:0000255" key="2">
    <source>
        <dbReference type="PROSITE-ProRule" id="PRU01261"/>
    </source>
</evidence>
<evidence type="ECO:0000256" key="3">
    <source>
        <dbReference type="SAM" id="MobiDB-lite"/>
    </source>
</evidence>